<feature type="chain" id="PRO_1000070074" description="Membrane protein insertase YidC">
    <location>
        <begin position="1"/>
        <end position="558"/>
    </location>
</feature>
<feature type="transmembrane region" description="Helical" evidence="1">
    <location>
        <begin position="3"/>
        <end position="23"/>
    </location>
</feature>
<feature type="transmembrane region" description="Helical" evidence="1">
    <location>
        <begin position="364"/>
        <end position="384"/>
    </location>
</feature>
<feature type="transmembrane region" description="Helical" evidence="1">
    <location>
        <begin position="438"/>
        <end position="458"/>
    </location>
</feature>
<feature type="transmembrane region" description="Helical" evidence="1">
    <location>
        <begin position="477"/>
        <end position="497"/>
    </location>
</feature>
<feature type="transmembrane region" description="Helical" evidence="1">
    <location>
        <begin position="508"/>
        <end position="528"/>
    </location>
</feature>
<name>YIDC_BURPS</name>
<dbReference type="EMBL" id="BX571965">
    <property type="protein sequence ID" value="CAH34062.1"/>
    <property type="molecule type" value="Genomic_DNA"/>
</dbReference>
<dbReference type="RefSeq" id="WP_004524584.1">
    <property type="nucleotide sequence ID" value="NZ_CP009538.1"/>
</dbReference>
<dbReference type="RefSeq" id="YP_106704.1">
    <property type="nucleotide sequence ID" value="NC_006350.1"/>
</dbReference>
<dbReference type="SMR" id="Q63YW1"/>
<dbReference type="STRING" id="272560.BPSL0078"/>
<dbReference type="GeneID" id="93058590"/>
<dbReference type="KEGG" id="bps:BPSL0078"/>
<dbReference type="PATRIC" id="fig|272560.51.peg.1656"/>
<dbReference type="eggNOG" id="COG0706">
    <property type="taxonomic scope" value="Bacteria"/>
</dbReference>
<dbReference type="Proteomes" id="UP000000605">
    <property type="component" value="Chromosome 1"/>
</dbReference>
<dbReference type="GO" id="GO:0005886">
    <property type="term" value="C:plasma membrane"/>
    <property type="evidence" value="ECO:0007669"/>
    <property type="project" value="UniProtKB-SubCell"/>
</dbReference>
<dbReference type="GO" id="GO:0032977">
    <property type="term" value="F:membrane insertase activity"/>
    <property type="evidence" value="ECO:0007669"/>
    <property type="project" value="InterPro"/>
</dbReference>
<dbReference type="GO" id="GO:0051205">
    <property type="term" value="P:protein insertion into membrane"/>
    <property type="evidence" value="ECO:0007669"/>
    <property type="project" value="TreeGrafter"/>
</dbReference>
<dbReference type="GO" id="GO:0015031">
    <property type="term" value="P:protein transport"/>
    <property type="evidence" value="ECO:0007669"/>
    <property type="project" value="UniProtKB-KW"/>
</dbReference>
<dbReference type="CDD" id="cd20070">
    <property type="entry name" value="5TM_YidC_Alb3"/>
    <property type="match status" value="1"/>
</dbReference>
<dbReference type="CDD" id="cd19961">
    <property type="entry name" value="EcYidC-like_peri"/>
    <property type="match status" value="1"/>
</dbReference>
<dbReference type="Gene3D" id="2.70.98.90">
    <property type="match status" value="1"/>
</dbReference>
<dbReference type="HAMAP" id="MF_01810">
    <property type="entry name" value="YidC_type1"/>
    <property type="match status" value="1"/>
</dbReference>
<dbReference type="InterPro" id="IPR019998">
    <property type="entry name" value="Membr_insert_YidC"/>
</dbReference>
<dbReference type="InterPro" id="IPR028053">
    <property type="entry name" value="Membr_insert_YidC_N"/>
</dbReference>
<dbReference type="InterPro" id="IPR001708">
    <property type="entry name" value="YidC/ALB3/OXA1/COX18"/>
</dbReference>
<dbReference type="InterPro" id="IPR028055">
    <property type="entry name" value="YidC/Oxa/ALB_C"/>
</dbReference>
<dbReference type="InterPro" id="IPR047196">
    <property type="entry name" value="YidC_ALB_C"/>
</dbReference>
<dbReference type="InterPro" id="IPR038221">
    <property type="entry name" value="YidC_periplasmic_sf"/>
</dbReference>
<dbReference type="NCBIfam" id="NF002352">
    <property type="entry name" value="PRK01318.1-3"/>
    <property type="match status" value="1"/>
</dbReference>
<dbReference type="NCBIfam" id="NF002353">
    <property type="entry name" value="PRK01318.1-4"/>
    <property type="match status" value="1"/>
</dbReference>
<dbReference type="NCBIfam" id="TIGR03593">
    <property type="entry name" value="yidC_nterm"/>
    <property type="match status" value="1"/>
</dbReference>
<dbReference type="NCBIfam" id="TIGR03592">
    <property type="entry name" value="yidC_oxa1_cterm"/>
    <property type="match status" value="1"/>
</dbReference>
<dbReference type="PANTHER" id="PTHR12428:SF65">
    <property type="entry name" value="CYTOCHROME C OXIDASE ASSEMBLY PROTEIN COX18, MITOCHONDRIAL"/>
    <property type="match status" value="1"/>
</dbReference>
<dbReference type="PANTHER" id="PTHR12428">
    <property type="entry name" value="OXA1"/>
    <property type="match status" value="1"/>
</dbReference>
<dbReference type="Pfam" id="PF02096">
    <property type="entry name" value="60KD_IMP"/>
    <property type="match status" value="1"/>
</dbReference>
<dbReference type="Pfam" id="PF14849">
    <property type="entry name" value="YidC_periplas"/>
    <property type="match status" value="1"/>
</dbReference>
<dbReference type="PRINTS" id="PR00701">
    <property type="entry name" value="60KDINNERMP"/>
</dbReference>
<dbReference type="PRINTS" id="PR01900">
    <property type="entry name" value="YIDCPROTEIN"/>
</dbReference>
<accession>Q63YW1</accession>
<gene>
    <name evidence="1" type="primary">yidC</name>
    <name type="ordered locus">BPSL0078</name>
</gene>
<evidence type="ECO:0000255" key="1">
    <source>
        <dbReference type="HAMAP-Rule" id="MF_01810"/>
    </source>
</evidence>
<keyword id="KW-0997">Cell inner membrane</keyword>
<keyword id="KW-1003">Cell membrane</keyword>
<keyword id="KW-0143">Chaperone</keyword>
<keyword id="KW-0472">Membrane</keyword>
<keyword id="KW-0653">Protein transport</keyword>
<keyword id="KW-1185">Reference proteome</keyword>
<keyword id="KW-0812">Transmembrane</keyword>
<keyword id="KW-1133">Transmembrane helix</keyword>
<keyword id="KW-0813">Transport</keyword>
<organism>
    <name type="scientific">Burkholderia pseudomallei (strain K96243)</name>
    <dbReference type="NCBI Taxonomy" id="272560"/>
    <lineage>
        <taxon>Bacteria</taxon>
        <taxon>Pseudomonadati</taxon>
        <taxon>Pseudomonadota</taxon>
        <taxon>Betaproteobacteria</taxon>
        <taxon>Burkholderiales</taxon>
        <taxon>Burkholderiaceae</taxon>
        <taxon>Burkholderia</taxon>
        <taxon>pseudomallei group</taxon>
    </lineage>
</organism>
<sequence length="558" mass="61133">MDIKRTVLWVIFFMSAVMLFDNWQRSHGRPSMFFPNVTQTNTASNATNGNGASGASAAAAANALPAAATGAAPATTAPAAQAQLVRFSTDVYNGEIDTRGGTLAKLTLTKAGDGKQPDLSVTLFDHTANHTYLARTGLLGGDFPNHNDVYAQVAGPTSLAADQNTLKLSFESPVKGGVKVVKTYTFTRGSYVIGVDTKIENVGAAPVTPSVYMELVRDNSSVETPMFSHTFLGPAVYTDQKHFQKITFGDIDKNKADYVTSADNGWIAMVQHYFASAWIPQSGAKRDIYVEKIDPTLYRVGVKQPVAAIAPGQSADVSARLFAGPEEERMLEGIAPGLELVKDYGWVTIIAKPLFWLLEKIHGFVGNWGWAIVLLTLLIKAVFFPLSAASYKSMARMKEITPRMQALRERFKSDPQKMNAALMELYKTEKVNPFGGCLPVVIQIPVFISLYWVLLASVEMRGAPWVLWIHDLSQRDPYFILPVLMAVSMFVQTKLNPTPPDPVQAKMMMFMPIAFSVMFFFFPAGLVLYYVVNNVLSIAQQYYITRTLGGAAAKKKAS</sequence>
<reference key="1">
    <citation type="journal article" date="2004" name="Proc. Natl. Acad. Sci. U.S.A.">
        <title>Genomic plasticity of the causative agent of melioidosis, Burkholderia pseudomallei.</title>
        <authorList>
            <person name="Holden M.T.G."/>
            <person name="Titball R.W."/>
            <person name="Peacock S.J."/>
            <person name="Cerdeno-Tarraga A.-M."/>
            <person name="Atkins T."/>
            <person name="Crossman L.C."/>
            <person name="Pitt T."/>
            <person name="Churcher C."/>
            <person name="Mungall K.L."/>
            <person name="Bentley S.D."/>
            <person name="Sebaihia M."/>
            <person name="Thomson N.R."/>
            <person name="Bason N."/>
            <person name="Beacham I.R."/>
            <person name="Brooks K."/>
            <person name="Brown K.A."/>
            <person name="Brown N.F."/>
            <person name="Challis G.L."/>
            <person name="Cherevach I."/>
            <person name="Chillingworth T."/>
            <person name="Cronin A."/>
            <person name="Crossett B."/>
            <person name="Davis P."/>
            <person name="DeShazer D."/>
            <person name="Feltwell T."/>
            <person name="Fraser A."/>
            <person name="Hance Z."/>
            <person name="Hauser H."/>
            <person name="Holroyd S."/>
            <person name="Jagels K."/>
            <person name="Keith K.E."/>
            <person name="Maddison M."/>
            <person name="Moule S."/>
            <person name="Price C."/>
            <person name="Quail M.A."/>
            <person name="Rabbinowitsch E."/>
            <person name="Rutherford K."/>
            <person name="Sanders M."/>
            <person name="Simmonds M."/>
            <person name="Songsivilai S."/>
            <person name="Stevens K."/>
            <person name="Tumapa S."/>
            <person name="Vesaratchavest M."/>
            <person name="Whitehead S."/>
            <person name="Yeats C."/>
            <person name="Barrell B.G."/>
            <person name="Oyston P.C.F."/>
            <person name="Parkhill J."/>
        </authorList>
    </citation>
    <scope>NUCLEOTIDE SEQUENCE [LARGE SCALE GENOMIC DNA]</scope>
    <source>
        <strain>K96243</strain>
    </source>
</reference>
<proteinExistence type="inferred from homology"/>
<protein>
    <recommendedName>
        <fullName evidence="1">Membrane protein insertase YidC</fullName>
    </recommendedName>
    <alternativeName>
        <fullName evidence="1">Foldase YidC</fullName>
    </alternativeName>
    <alternativeName>
        <fullName evidence="1">Membrane integrase YidC</fullName>
    </alternativeName>
    <alternativeName>
        <fullName evidence="1">Membrane protein YidC</fullName>
    </alternativeName>
</protein>
<comment type="function">
    <text evidence="1">Required for the insertion and/or proper folding and/or complex formation of integral membrane proteins into the membrane. Involved in integration of membrane proteins that insert both dependently and independently of the Sec translocase complex, as well as at least some lipoproteins. Aids folding of multispanning membrane proteins.</text>
</comment>
<comment type="subunit">
    <text evidence="1">Interacts with the Sec translocase complex via SecD. Specifically interacts with transmembrane segments of nascent integral membrane proteins during membrane integration.</text>
</comment>
<comment type="subcellular location">
    <subcellularLocation>
        <location evidence="1">Cell inner membrane</location>
        <topology evidence="1">Multi-pass membrane protein</topology>
    </subcellularLocation>
</comment>
<comment type="similarity">
    <text evidence="1">Belongs to the OXA1/ALB3/YidC family. Type 1 subfamily.</text>
</comment>